<evidence type="ECO:0000255" key="1">
    <source>
        <dbReference type="HAMAP-Rule" id="MF_01300"/>
    </source>
</evidence>
<dbReference type="EMBL" id="CP000655">
    <property type="protein sequence ID" value="ABP35245.1"/>
    <property type="molecule type" value="Genomic_DNA"/>
</dbReference>
<dbReference type="RefSeq" id="WP_011903868.1">
    <property type="nucleotide sequence ID" value="NC_009379.1"/>
</dbReference>
<dbReference type="SMR" id="A4T0I1"/>
<dbReference type="GeneID" id="31482424"/>
<dbReference type="KEGG" id="pnu:Pnuc_2034"/>
<dbReference type="eggNOG" id="COG1301">
    <property type="taxonomic scope" value="Bacteria"/>
</dbReference>
<dbReference type="HOGENOM" id="CLU_019375_7_0_4"/>
<dbReference type="Proteomes" id="UP000000231">
    <property type="component" value="Chromosome"/>
</dbReference>
<dbReference type="GO" id="GO:0005886">
    <property type="term" value="C:plasma membrane"/>
    <property type="evidence" value="ECO:0007669"/>
    <property type="project" value="UniProtKB-SubCell"/>
</dbReference>
<dbReference type="GO" id="GO:0015138">
    <property type="term" value="F:fumarate transmembrane transporter activity"/>
    <property type="evidence" value="ECO:0007669"/>
    <property type="project" value="TreeGrafter"/>
</dbReference>
<dbReference type="GO" id="GO:0015366">
    <property type="term" value="F:malate:proton symporter activity"/>
    <property type="evidence" value="ECO:0007669"/>
    <property type="project" value="TreeGrafter"/>
</dbReference>
<dbReference type="GO" id="GO:0015141">
    <property type="term" value="F:succinate transmembrane transporter activity"/>
    <property type="evidence" value="ECO:0007669"/>
    <property type="project" value="TreeGrafter"/>
</dbReference>
<dbReference type="GO" id="GO:0070778">
    <property type="term" value="P:L-aspartate transmembrane transport"/>
    <property type="evidence" value="ECO:0007669"/>
    <property type="project" value="TreeGrafter"/>
</dbReference>
<dbReference type="FunFam" id="1.10.3860.10:FF:000001">
    <property type="entry name" value="C4-dicarboxylate transport protein"/>
    <property type="match status" value="1"/>
</dbReference>
<dbReference type="Gene3D" id="1.10.3860.10">
    <property type="entry name" value="Sodium:dicarboxylate symporter"/>
    <property type="match status" value="1"/>
</dbReference>
<dbReference type="HAMAP" id="MF_01300">
    <property type="entry name" value="C4_dicarb_transport"/>
    <property type="match status" value="1"/>
</dbReference>
<dbReference type="InterPro" id="IPR023954">
    <property type="entry name" value="C4_dicarb_transport"/>
</dbReference>
<dbReference type="InterPro" id="IPR001991">
    <property type="entry name" value="Na-dicarboxylate_symporter"/>
</dbReference>
<dbReference type="InterPro" id="IPR018107">
    <property type="entry name" value="Na-dicarboxylate_symporter_CS"/>
</dbReference>
<dbReference type="InterPro" id="IPR036458">
    <property type="entry name" value="Na:dicarbo_symporter_sf"/>
</dbReference>
<dbReference type="NCBIfam" id="NF002461">
    <property type="entry name" value="PRK01663.1"/>
    <property type="match status" value="1"/>
</dbReference>
<dbReference type="NCBIfam" id="NF009587">
    <property type="entry name" value="PRK13027.1"/>
    <property type="match status" value="1"/>
</dbReference>
<dbReference type="PANTHER" id="PTHR42865:SF1">
    <property type="entry name" value="AEROBIC C4-DICARBOXYLATE TRANSPORT PROTEIN"/>
    <property type="match status" value="1"/>
</dbReference>
<dbReference type="PANTHER" id="PTHR42865">
    <property type="entry name" value="PROTON/GLUTAMATE-ASPARTATE SYMPORTER"/>
    <property type="match status" value="1"/>
</dbReference>
<dbReference type="Pfam" id="PF00375">
    <property type="entry name" value="SDF"/>
    <property type="match status" value="1"/>
</dbReference>
<dbReference type="PRINTS" id="PR00173">
    <property type="entry name" value="EDTRNSPORT"/>
</dbReference>
<dbReference type="SUPFAM" id="SSF118215">
    <property type="entry name" value="Proton glutamate symport protein"/>
    <property type="match status" value="1"/>
</dbReference>
<dbReference type="PROSITE" id="PS00714">
    <property type="entry name" value="NA_DICARBOXYL_SYMP_2"/>
    <property type="match status" value="1"/>
</dbReference>
<organism>
    <name type="scientific">Polynucleobacter asymbioticus (strain DSM 18221 / CIP 109841 / QLW-P1DMWA-1)</name>
    <name type="common">Polynucleobacter necessarius subsp. asymbioticus</name>
    <dbReference type="NCBI Taxonomy" id="312153"/>
    <lineage>
        <taxon>Bacteria</taxon>
        <taxon>Pseudomonadati</taxon>
        <taxon>Pseudomonadota</taxon>
        <taxon>Betaproteobacteria</taxon>
        <taxon>Burkholderiales</taxon>
        <taxon>Burkholderiaceae</taxon>
        <taxon>Polynucleobacter</taxon>
    </lineage>
</organism>
<keyword id="KW-1003">Cell membrane</keyword>
<keyword id="KW-0472">Membrane</keyword>
<keyword id="KW-1185">Reference proteome</keyword>
<keyword id="KW-0769">Symport</keyword>
<keyword id="KW-0812">Transmembrane</keyword>
<keyword id="KW-1133">Transmembrane helix</keyword>
<keyword id="KW-0813">Transport</keyword>
<comment type="function">
    <text evidence="1">Responsible for the transport of dicarboxylates such as succinate, fumarate, and malate across the membrane.</text>
</comment>
<comment type="subcellular location">
    <subcellularLocation>
        <location evidence="1">Cell membrane</location>
        <topology evidence="1">Multi-pass membrane protein</topology>
    </subcellularLocation>
</comment>
<comment type="similarity">
    <text evidence="1">Belongs to the dicarboxylate/amino acid:cation symporter (DAACS) (TC 2.A.23) family.</text>
</comment>
<sequence length="442" mass="47322">MTATLKKPPIYKVLYFQVLTAVVIGVLLGHFYPSLGVDMKPFGDAFIKGIKMLIAPIIFCTVVLGIAGMEDMKKVGKTGGLALLYFEIVSTIALMVGLVVVNVLQPGAGMNIDPASLDTKGIAAYTGPGKMGTTTEFLLNIIPSSAVDAFAKGEILQVLFIAILFGFALHKFGGRGTMVFDLIEKTSHVLFDMIAIIMKFAPIGAFGAMAFTIGKYGIGSLFSLGKLMGSFYLTCLLFVFIVLGIIARLNGFNIFKFVRYIKEELLIVLGTSSSESVLPRMMEKMELLGAKKACVGLVIPTGYSFNLDGTSIYLTMAAVFIAQATNTPMTLLQEVTLLAVLLLTSKGAAGVTGSGFIVLAATLSAVGDVPVAGLAIILGIDRFMSEARALTNLVGNGVATIVVAKWTGELDQKQLTRALNRDDWIEAQEPEMILDHQQDKMR</sequence>
<proteinExistence type="inferred from homology"/>
<accession>A4T0I1</accession>
<name>DCTA_POLAQ</name>
<protein>
    <recommendedName>
        <fullName evidence="1">C4-dicarboxylate transport protein</fullName>
    </recommendedName>
</protein>
<gene>
    <name evidence="1" type="primary">dctA</name>
    <name type="ordered locus">Pnuc_2034</name>
</gene>
<feature type="chain" id="PRO_1000085902" description="C4-dicarboxylate transport protein">
    <location>
        <begin position="1"/>
        <end position="442"/>
    </location>
</feature>
<feature type="transmembrane region" description="Helical" evidence="1">
    <location>
        <begin position="13"/>
        <end position="33"/>
    </location>
</feature>
<feature type="transmembrane region" description="Helical" evidence="1">
    <location>
        <begin position="49"/>
        <end position="69"/>
    </location>
</feature>
<feature type="transmembrane region" description="Helical" evidence="1">
    <location>
        <begin position="81"/>
        <end position="101"/>
    </location>
</feature>
<feature type="transmembrane region" description="Helical" evidence="1">
    <location>
        <begin position="149"/>
        <end position="169"/>
    </location>
</feature>
<feature type="transmembrane region" description="Helical" evidence="1">
    <location>
        <begin position="193"/>
        <end position="213"/>
    </location>
</feature>
<feature type="transmembrane region" description="Helical" evidence="1">
    <location>
        <begin position="227"/>
        <end position="247"/>
    </location>
</feature>
<feature type="transmembrane region" description="Helical" evidence="1">
    <location>
        <begin position="312"/>
        <end position="332"/>
    </location>
</feature>
<feature type="transmembrane region" description="Helical" evidence="1">
    <location>
        <begin position="336"/>
        <end position="356"/>
    </location>
</feature>
<feature type="transmembrane region" description="Helical" evidence="1">
    <location>
        <begin position="357"/>
        <end position="377"/>
    </location>
</feature>
<reference key="1">
    <citation type="journal article" date="2012" name="Stand. Genomic Sci.">
        <title>Complete genome sequence of Polynucleobacter necessarius subsp. asymbioticus type strain (QLW-P1DMWA-1(T)).</title>
        <authorList>
            <person name="Meincke L."/>
            <person name="Copeland A."/>
            <person name="Lapidus A."/>
            <person name="Lucas S."/>
            <person name="Berry K.W."/>
            <person name="Del Rio T.G."/>
            <person name="Hammon N."/>
            <person name="Dalin E."/>
            <person name="Tice H."/>
            <person name="Pitluck S."/>
            <person name="Richardson P."/>
            <person name="Bruce D."/>
            <person name="Goodwin L."/>
            <person name="Han C."/>
            <person name="Tapia R."/>
            <person name="Detter J.C."/>
            <person name="Schmutz J."/>
            <person name="Brettin T."/>
            <person name="Larimer F."/>
            <person name="Land M."/>
            <person name="Hauser L."/>
            <person name="Kyrpides N.C."/>
            <person name="Ivanova N."/>
            <person name="Goker M."/>
            <person name="Woyke T."/>
            <person name="Wu Q.L."/>
            <person name="Pockl M."/>
            <person name="Hahn M.W."/>
            <person name="Klenk H.P."/>
        </authorList>
    </citation>
    <scope>NUCLEOTIDE SEQUENCE [LARGE SCALE GENOMIC DNA]</scope>
    <source>
        <strain>DSM 18221 / CIP 109841 / QLW-P1DMWA-1</strain>
    </source>
</reference>